<name>PSBL_PHOTN</name>
<comment type="function">
    <text evidence="1">One of the components of the core complex of photosystem II (PSII). PSII is a light-driven water:plastoquinone oxidoreductase that uses light energy to abstract electrons from H(2)O, generating O(2) and a proton gradient subsequently used for ATP formation. It consists of a core antenna complex that captures photons, and an electron transfer chain that converts photonic excitation into a charge separation. This subunit is found at the monomer-monomer interface and is required for correct PSII assembly and/or dimerization.</text>
</comment>
<comment type="subunit">
    <text evidence="1">PSII is composed of 1 copy each of membrane proteins PsbA, PsbB, PsbC, PsbD, PsbE, PsbF, PsbH, PsbI, PsbJ, PsbK, PsbL, PsbM, PsbT, PsbX, PsbY, PsbZ, Psb30/Ycf12, at least 3 peripheral proteins of the oxygen-evolving complex and a large number of cofactors. It forms dimeric complexes.</text>
</comment>
<comment type="subcellular location">
    <subcellularLocation>
        <location evidence="1">Plastid</location>
        <location evidence="1">Chloroplast thylakoid membrane</location>
        <topology evidence="1">Single-pass membrane protein</topology>
    </subcellularLocation>
</comment>
<comment type="similarity">
    <text evidence="1">Belongs to the PsbL family.</text>
</comment>
<organism>
    <name type="scientific">Phormium tenax</name>
    <name type="common">New Zealand flax</name>
    <dbReference type="NCBI Taxonomy" id="51475"/>
    <lineage>
        <taxon>Eukaryota</taxon>
        <taxon>Viridiplantae</taxon>
        <taxon>Streptophyta</taxon>
        <taxon>Embryophyta</taxon>
        <taxon>Tracheophyta</taxon>
        <taxon>Spermatophyta</taxon>
        <taxon>Magnoliopsida</taxon>
        <taxon>Liliopsida</taxon>
        <taxon>Asparagales</taxon>
        <taxon>Asphodelaceae</taxon>
        <taxon>Hemerocallidoideae</taxon>
        <taxon>Phormium</taxon>
    </lineage>
</organism>
<keyword id="KW-0150">Chloroplast</keyword>
<keyword id="KW-0472">Membrane</keyword>
<keyword id="KW-0602">Photosynthesis</keyword>
<keyword id="KW-0604">Photosystem II</keyword>
<keyword id="KW-0934">Plastid</keyword>
<keyword id="KW-0674">Reaction center</keyword>
<keyword id="KW-0793">Thylakoid</keyword>
<keyword id="KW-0812">Transmembrane</keyword>
<keyword id="KW-1133">Transmembrane helix</keyword>
<proteinExistence type="inferred from homology"/>
<gene>
    <name evidence="1" type="primary">psbL</name>
</gene>
<reference key="1">
    <citation type="submission" date="2002-09" db="EMBL/GenBank/DDBJ databases">
        <title>Phylogenetic relationships among the major lineages of Asparagales based on a large chloroplast data set.</title>
        <authorList>
            <person name="McPherson M.A."/>
            <person name="Rai H.S."/>
            <person name="Wong W.A."/>
            <person name="Graham S.W."/>
        </authorList>
    </citation>
    <scope>NUCLEOTIDE SEQUENCE [GENOMIC DNA]</scope>
</reference>
<dbReference type="EMBL" id="AY147579">
    <property type="protein sequence ID" value="AAN32418.1"/>
    <property type="molecule type" value="Genomic_DNA"/>
</dbReference>
<dbReference type="SMR" id="Q67HD6"/>
<dbReference type="GO" id="GO:0009535">
    <property type="term" value="C:chloroplast thylakoid membrane"/>
    <property type="evidence" value="ECO:0007669"/>
    <property type="project" value="UniProtKB-SubCell"/>
</dbReference>
<dbReference type="GO" id="GO:0009539">
    <property type="term" value="C:photosystem II reaction center"/>
    <property type="evidence" value="ECO:0007669"/>
    <property type="project" value="InterPro"/>
</dbReference>
<dbReference type="GO" id="GO:0015979">
    <property type="term" value="P:photosynthesis"/>
    <property type="evidence" value="ECO:0007669"/>
    <property type="project" value="UniProtKB-UniRule"/>
</dbReference>
<dbReference type="HAMAP" id="MF_01317">
    <property type="entry name" value="PSII_PsbL"/>
    <property type="match status" value="1"/>
</dbReference>
<dbReference type="InterPro" id="IPR003372">
    <property type="entry name" value="PSII_PsbL"/>
</dbReference>
<dbReference type="InterPro" id="IPR037266">
    <property type="entry name" value="PSII_PsbL_sf"/>
</dbReference>
<dbReference type="NCBIfam" id="NF001972">
    <property type="entry name" value="PRK00753.1"/>
    <property type="match status" value="1"/>
</dbReference>
<dbReference type="Pfam" id="PF02419">
    <property type="entry name" value="PsbL"/>
    <property type="match status" value="1"/>
</dbReference>
<dbReference type="SUPFAM" id="SSF161017">
    <property type="entry name" value="Photosystem II reaction center protein L, PsbL"/>
    <property type="match status" value="1"/>
</dbReference>
<protein>
    <recommendedName>
        <fullName evidence="1">Photosystem II reaction center protein L</fullName>
        <shortName evidence="1">PSII-L</shortName>
    </recommendedName>
</protein>
<geneLocation type="chloroplast"/>
<feature type="chain" id="PRO_0000219757" description="Photosystem II reaction center protein L">
    <location>
        <begin position="1"/>
        <end position="38"/>
    </location>
</feature>
<feature type="transmembrane region" description="Helical" evidence="1">
    <location>
        <begin position="17"/>
        <end position="37"/>
    </location>
</feature>
<accession>Q67HD6</accession>
<evidence type="ECO:0000255" key="1">
    <source>
        <dbReference type="HAMAP-Rule" id="MF_01317"/>
    </source>
</evidence>
<sequence>MTQSNPNEQNVELNRTSLYWGLLLIFVLAVLFSNYFFN</sequence>